<evidence type="ECO:0000255" key="1">
    <source>
        <dbReference type="HAMAP-Rule" id="MF_00129"/>
    </source>
</evidence>
<dbReference type="EMBL" id="CP000453">
    <property type="protein sequence ID" value="ABI58220.1"/>
    <property type="molecule type" value="Genomic_DNA"/>
</dbReference>
<dbReference type="RefSeq" id="WP_011630613.1">
    <property type="nucleotide sequence ID" value="NC_008340.1"/>
</dbReference>
<dbReference type="SMR" id="Q0A4L7"/>
<dbReference type="KEGG" id="aeh:Mlg_2880"/>
<dbReference type="eggNOG" id="COG0445">
    <property type="taxonomic scope" value="Bacteria"/>
</dbReference>
<dbReference type="HOGENOM" id="CLU_007831_2_2_6"/>
<dbReference type="OrthoDB" id="9815560at2"/>
<dbReference type="Proteomes" id="UP000001962">
    <property type="component" value="Chromosome"/>
</dbReference>
<dbReference type="GO" id="GO:0005829">
    <property type="term" value="C:cytosol"/>
    <property type="evidence" value="ECO:0007669"/>
    <property type="project" value="TreeGrafter"/>
</dbReference>
<dbReference type="GO" id="GO:0050660">
    <property type="term" value="F:flavin adenine dinucleotide binding"/>
    <property type="evidence" value="ECO:0007669"/>
    <property type="project" value="UniProtKB-UniRule"/>
</dbReference>
<dbReference type="GO" id="GO:0030488">
    <property type="term" value="P:tRNA methylation"/>
    <property type="evidence" value="ECO:0007669"/>
    <property type="project" value="TreeGrafter"/>
</dbReference>
<dbReference type="GO" id="GO:0002098">
    <property type="term" value="P:tRNA wobble uridine modification"/>
    <property type="evidence" value="ECO:0007669"/>
    <property type="project" value="InterPro"/>
</dbReference>
<dbReference type="FunFam" id="1.10.10.1800:FF:000001">
    <property type="entry name" value="tRNA uridine 5-carboxymethylaminomethyl modification enzyme MnmG"/>
    <property type="match status" value="1"/>
</dbReference>
<dbReference type="FunFam" id="1.10.150.570:FF:000001">
    <property type="entry name" value="tRNA uridine 5-carboxymethylaminomethyl modification enzyme MnmG"/>
    <property type="match status" value="1"/>
</dbReference>
<dbReference type="FunFam" id="3.50.50.60:FF:000002">
    <property type="entry name" value="tRNA uridine 5-carboxymethylaminomethyl modification enzyme MnmG"/>
    <property type="match status" value="1"/>
</dbReference>
<dbReference type="FunFam" id="3.50.50.60:FF:000010">
    <property type="entry name" value="tRNA uridine 5-carboxymethylaminomethyl modification enzyme MnmG"/>
    <property type="match status" value="1"/>
</dbReference>
<dbReference type="Gene3D" id="3.50.50.60">
    <property type="entry name" value="FAD/NAD(P)-binding domain"/>
    <property type="match status" value="2"/>
</dbReference>
<dbReference type="Gene3D" id="1.10.150.570">
    <property type="entry name" value="GidA associated domain, C-terminal subdomain"/>
    <property type="match status" value="1"/>
</dbReference>
<dbReference type="Gene3D" id="1.10.10.1800">
    <property type="entry name" value="tRNA uridine 5-carboxymethylaminomethyl modification enzyme MnmG/GidA"/>
    <property type="match status" value="1"/>
</dbReference>
<dbReference type="HAMAP" id="MF_00129">
    <property type="entry name" value="MnmG_GidA"/>
    <property type="match status" value="1"/>
</dbReference>
<dbReference type="InterPro" id="IPR036188">
    <property type="entry name" value="FAD/NAD-bd_sf"/>
</dbReference>
<dbReference type="InterPro" id="IPR049312">
    <property type="entry name" value="GIDA_C_N"/>
</dbReference>
<dbReference type="InterPro" id="IPR004416">
    <property type="entry name" value="MnmG"/>
</dbReference>
<dbReference type="InterPro" id="IPR002218">
    <property type="entry name" value="MnmG-rel"/>
</dbReference>
<dbReference type="InterPro" id="IPR020595">
    <property type="entry name" value="MnmG-rel_CS"/>
</dbReference>
<dbReference type="InterPro" id="IPR026904">
    <property type="entry name" value="MnmG_C"/>
</dbReference>
<dbReference type="InterPro" id="IPR047001">
    <property type="entry name" value="MnmG_C_subdom"/>
</dbReference>
<dbReference type="InterPro" id="IPR044920">
    <property type="entry name" value="MnmG_C_subdom_sf"/>
</dbReference>
<dbReference type="InterPro" id="IPR040131">
    <property type="entry name" value="MnmG_N"/>
</dbReference>
<dbReference type="NCBIfam" id="TIGR00136">
    <property type="entry name" value="mnmG_gidA"/>
    <property type="match status" value="1"/>
</dbReference>
<dbReference type="PANTHER" id="PTHR11806">
    <property type="entry name" value="GLUCOSE INHIBITED DIVISION PROTEIN A"/>
    <property type="match status" value="1"/>
</dbReference>
<dbReference type="PANTHER" id="PTHR11806:SF0">
    <property type="entry name" value="PROTEIN MTO1 HOMOLOG, MITOCHONDRIAL"/>
    <property type="match status" value="1"/>
</dbReference>
<dbReference type="Pfam" id="PF01134">
    <property type="entry name" value="GIDA"/>
    <property type="match status" value="1"/>
</dbReference>
<dbReference type="Pfam" id="PF21680">
    <property type="entry name" value="GIDA_C_1st"/>
    <property type="match status" value="1"/>
</dbReference>
<dbReference type="Pfam" id="PF13932">
    <property type="entry name" value="SAM_GIDA_C"/>
    <property type="match status" value="1"/>
</dbReference>
<dbReference type="PRINTS" id="PR00368">
    <property type="entry name" value="FADPNR"/>
</dbReference>
<dbReference type="SMART" id="SM01228">
    <property type="entry name" value="GIDA_assoc_3"/>
    <property type="match status" value="1"/>
</dbReference>
<dbReference type="SUPFAM" id="SSF51905">
    <property type="entry name" value="FAD/NAD(P)-binding domain"/>
    <property type="match status" value="1"/>
</dbReference>
<dbReference type="PROSITE" id="PS01280">
    <property type="entry name" value="GIDA_1"/>
    <property type="match status" value="1"/>
</dbReference>
<dbReference type="PROSITE" id="PS01281">
    <property type="entry name" value="GIDA_2"/>
    <property type="match status" value="1"/>
</dbReference>
<organism>
    <name type="scientific">Alkalilimnicola ehrlichii (strain ATCC BAA-1101 / DSM 17681 / MLHE-1)</name>
    <dbReference type="NCBI Taxonomy" id="187272"/>
    <lineage>
        <taxon>Bacteria</taxon>
        <taxon>Pseudomonadati</taxon>
        <taxon>Pseudomonadota</taxon>
        <taxon>Gammaproteobacteria</taxon>
        <taxon>Chromatiales</taxon>
        <taxon>Ectothiorhodospiraceae</taxon>
        <taxon>Alkalilimnicola</taxon>
    </lineage>
</organism>
<protein>
    <recommendedName>
        <fullName evidence="1">tRNA uridine 5-carboxymethylaminomethyl modification enzyme MnmG</fullName>
    </recommendedName>
    <alternativeName>
        <fullName evidence="1">Glucose-inhibited division protein A</fullName>
    </alternativeName>
</protein>
<proteinExistence type="inferred from homology"/>
<comment type="function">
    <text evidence="1">NAD-binding protein involved in the addition of a carboxymethylaminomethyl (cmnm) group at the wobble position (U34) of certain tRNAs, forming tRNA-cmnm(5)s(2)U34.</text>
</comment>
<comment type="cofactor">
    <cofactor evidence="1">
        <name>FAD</name>
        <dbReference type="ChEBI" id="CHEBI:57692"/>
    </cofactor>
</comment>
<comment type="subunit">
    <text evidence="1">Homodimer. Heterotetramer of two MnmE and two MnmG subunits.</text>
</comment>
<comment type="subcellular location">
    <subcellularLocation>
        <location evidence="1">Cytoplasm</location>
    </subcellularLocation>
</comment>
<comment type="similarity">
    <text evidence="1">Belongs to the MnmG family.</text>
</comment>
<sequence length="629" mass="69285">MDHPERFDVIVVGGGHAGTEAAMAAARIGARTLLLTHSIETVGQMSCNPAIGGIGKGHLVREIDALGGIMARAADRGGIQFRTLNSRKGPAVRATRAQADRQLYRQAIRRAVENQPRLALFQQSVDDLIVEGGRVTGVVTGMGLRFRAPAVVLTVGTFLGGRIHIGESNYGGGRAGDPAANALAARLRELPFQVDRLKTGTPPRLDGRTIDWARLTEQPGDDPAPVFSFLGRPDEHPAQVPCHIAHTRPETHDIIRGALDRSPMYSGTIEGVGPRYCPSIEDKVVRFADKGSHQIFLEPEGLDTHEVYPNGISTSLPFDVQYELVRSIPGLEQARIVRPGYAIEYDFFDPRGLHPTLETRHLEGLWFAGQINGTTGYEEAAAQGLLAGLNAALRVQGREPWYPRRDQAYLGVLVDDLITRGTREPYRMFTSRAEYRLMLREDNADLRLTPIGRDLGLVDDERWRRFNAKREALEREQARLAATLIRPGDLPDALARQVLGGPLRKEQRLEELLRRPDVGYADLMRLPGAGDPVPDAEVVEQLEIQARYAGYLERQHDEVARARRHEQLPLPEGLAYDRVAGLSSEVREKLAAHRPATVGQAARIPGVTPAAVSLLLVHLRRQGLLRESA</sequence>
<gene>
    <name evidence="1" type="primary">mnmG</name>
    <name evidence="1" type="synonym">gidA</name>
    <name type="ordered locus">Mlg_2880</name>
</gene>
<accession>Q0A4L7</accession>
<keyword id="KW-0963">Cytoplasm</keyword>
<keyword id="KW-0274">FAD</keyword>
<keyword id="KW-0285">Flavoprotein</keyword>
<keyword id="KW-0520">NAD</keyword>
<keyword id="KW-1185">Reference proteome</keyword>
<keyword id="KW-0819">tRNA processing</keyword>
<reference key="1">
    <citation type="submission" date="2006-08" db="EMBL/GenBank/DDBJ databases">
        <title>Complete sequence of Alkalilimnicola ehrilichei MLHE-1.</title>
        <authorList>
            <person name="Copeland A."/>
            <person name="Lucas S."/>
            <person name="Lapidus A."/>
            <person name="Barry K."/>
            <person name="Detter J.C."/>
            <person name="Glavina del Rio T."/>
            <person name="Hammon N."/>
            <person name="Israni S."/>
            <person name="Dalin E."/>
            <person name="Tice H."/>
            <person name="Pitluck S."/>
            <person name="Sims D."/>
            <person name="Brettin T."/>
            <person name="Bruce D."/>
            <person name="Han C."/>
            <person name="Tapia R."/>
            <person name="Gilna P."/>
            <person name="Schmutz J."/>
            <person name="Larimer F."/>
            <person name="Land M."/>
            <person name="Hauser L."/>
            <person name="Kyrpides N."/>
            <person name="Mikhailova N."/>
            <person name="Oremland R.S."/>
            <person name="Hoeft S.E."/>
            <person name="Switzer-Blum J."/>
            <person name="Kulp T."/>
            <person name="King G."/>
            <person name="Tabita R."/>
            <person name="Witte B."/>
            <person name="Santini J.M."/>
            <person name="Basu P."/>
            <person name="Hollibaugh J.T."/>
            <person name="Xie G."/>
            <person name="Stolz J.F."/>
            <person name="Richardson P."/>
        </authorList>
    </citation>
    <scope>NUCLEOTIDE SEQUENCE [LARGE SCALE GENOMIC DNA]</scope>
    <source>
        <strain>ATCC BAA-1101 / DSM 17681 / MLHE-1</strain>
    </source>
</reference>
<name>MNMG_ALKEH</name>
<feature type="chain" id="PRO_1000016543" description="tRNA uridine 5-carboxymethylaminomethyl modification enzyme MnmG">
    <location>
        <begin position="1"/>
        <end position="629"/>
    </location>
</feature>
<feature type="binding site" evidence="1">
    <location>
        <begin position="13"/>
        <end position="18"/>
    </location>
    <ligand>
        <name>FAD</name>
        <dbReference type="ChEBI" id="CHEBI:57692"/>
    </ligand>
</feature>
<feature type="binding site" evidence="1">
    <location>
        <begin position="273"/>
        <end position="287"/>
    </location>
    <ligand>
        <name>NAD(+)</name>
        <dbReference type="ChEBI" id="CHEBI:57540"/>
    </ligand>
</feature>